<accession>B2TM00</accession>
<comment type="function">
    <text evidence="1">Catalyzes the formation of N(7)-methylguanine at position 46 (m7G46) in tRNA.</text>
</comment>
<comment type="catalytic activity">
    <reaction evidence="1">
        <text>guanosine(46) in tRNA + S-adenosyl-L-methionine = N(7)-methylguanosine(46) in tRNA + S-adenosyl-L-homocysteine</text>
        <dbReference type="Rhea" id="RHEA:42708"/>
        <dbReference type="Rhea" id="RHEA-COMP:10188"/>
        <dbReference type="Rhea" id="RHEA-COMP:10189"/>
        <dbReference type="ChEBI" id="CHEBI:57856"/>
        <dbReference type="ChEBI" id="CHEBI:59789"/>
        <dbReference type="ChEBI" id="CHEBI:74269"/>
        <dbReference type="ChEBI" id="CHEBI:74480"/>
        <dbReference type="EC" id="2.1.1.33"/>
    </reaction>
</comment>
<comment type="pathway">
    <text evidence="1">tRNA modification; N(7)-methylguanine-tRNA biosynthesis.</text>
</comment>
<comment type="similarity">
    <text evidence="1">Belongs to the class I-like SAM-binding methyltransferase superfamily. TrmB family.</text>
</comment>
<proteinExistence type="inferred from homology"/>
<organism>
    <name type="scientific">Clostridium botulinum (strain Eklund 17B / Type B)</name>
    <dbReference type="NCBI Taxonomy" id="935198"/>
    <lineage>
        <taxon>Bacteria</taxon>
        <taxon>Bacillati</taxon>
        <taxon>Bacillota</taxon>
        <taxon>Clostridia</taxon>
        <taxon>Eubacteriales</taxon>
        <taxon>Clostridiaceae</taxon>
        <taxon>Clostridium</taxon>
    </lineage>
</organism>
<evidence type="ECO:0000255" key="1">
    <source>
        <dbReference type="HAMAP-Rule" id="MF_01057"/>
    </source>
</evidence>
<dbReference type="EC" id="2.1.1.33" evidence="1"/>
<dbReference type="EMBL" id="CP001056">
    <property type="protein sequence ID" value="ACD24441.1"/>
    <property type="molecule type" value="Genomic_DNA"/>
</dbReference>
<dbReference type="SMR" id="B2TM00"/>
<dbReference type="KEGG" id="cbk:CLL_A0894"/>
<dbReference type="PATRIC" id="fig|935198.13.peg.844"/>
<dbReference type="HOGENOM" id="CLU_050910_2_1_9"/>
<dbReference type="UniPathway" id="UPA00989"/>
<dbReference type="Proteomes" id="UP000001195">
    <property type="component" value="Chromosome"/>
</dbReference>
<dbReference type="GO" id="GO:0043527">
    <property type="term" value="C:tRNA methyltransferase complex"/>
    <property type="evidence" value="ECO:0007669"/>
    <property type="project" value="TreeGrafter"/>
</dbReference>
<dbReference type="GO" id="GO:0008176">
    <property type="term" value="F:tRNA (guanine(46)-N7)-methyltransferase activity"/>
    <property type="evidence" value="ECO:0007669"/>
    <property type="project" value="UniProtKB-UniRule"/>
</dbReference>
<dbReference type="Gene3D" id="3.40.50.150">
    <property type="entry name" value="Vaccinia Virus protein VP39"/>
    <property type="match status" value="1"/>
</dbReference>
<dbReference type="HAMAP" id="MF_01057">
    <property type="entry name" value="tRNA_methyltr_TrmB"/>
    <property type="match status" value="1"/>
</dbReference>
<dbReference type="InterPro" id="IPR029063">
    <property type="entry name" value="SAM-dependent_MTases_sf"/>
</dbReference>
<dbReference type="InterPro" id="IPR003358">
    <property type="entry name" value="tRNA_(Gua-N-7)_MeTrfase_Trmb"/>
</dbReference>
<dbReference type="InterPro" id="IPR055361">
    <property type="entry name" value="tRNA_methyltr_TrmB_bact"/>
</dbReference>
<dbReference type="NCBIfam" id="NF001080">
    <property type="entry name" value="PRK00121.2-2"/>
    <property type="match status" value="1"/>
</dbReference>
<dbReference type="NCBIfam" id="TIGR00091">
    <property type="entry name" value="tRNA (guanosine(46)-N7)-methyltransferase TrmB"/>
    <property type="match status" value="1"/>
</dbReference>
<dbReference type="PANTHER" id="PTHR23417">
    <property type="entry name" value="3-DEOXY-D-MANNO-OCTULOSONIC-ACID TRANSFERASE/TRNA GUANINE-N 7 - -METHYLTRANSFERASE"/>
    <property type="match status" value="1"/>
</dbReference>
<dbReference type="PANTHER" id="PTHR23417:SF14">
    <property type="entry name" value="PENTACOTRIPEPTIDE-REPEAT REGION OF PRORP DOMAIN-CONTAINING PROTEIN"/>
    <property type="match status" value="1"/>
</dbReference>
<dbReference type="Pfam" id="PF02390">
    <property type="entry name" value="Methyltransf_4"/>
    <property type="match status" value="1"/>
</dbReference>
<dbReference type="SUPFAM" id="SSF53335">
    <property type="entry name" value="S-adenosyl-L-methionine-dependent methyltransferases"/>
    <property type="match status" value="1"/>
</dbReference>
<dbReference type="PROSITE" id="PS51625">
    <property type="entry name" value="SAM_MT_TRMB"/>
    <property type="match status" value="1"/>
</dbReference>
<sequence length="219" mass="26104">MRMRKKPWARPELESCNFFIVNPKENKGKWNESFNNENPIYLELGCGKGVFVAVHGSDNENINYIAIDIKDEVLGLAKRNIEKAYNEKNKELNNIKLMAQEIGLINEILDENDKISRIYINFCNPWPKKKHKKRRLTHTRQLIQYRNFLKENGEIWFKTDDDELFEESLEYFKEGKFRIEYITYDLHTSGFEGNIQTEHERMFTEQGIKTKFLIAIKED</sequence>
<gene>
    <name evidence="1" type="primary">trmB</name>
    <name type="ordered locus">CLL_A0894</name>
</gene>
<feature type="chain" id="PRO_1000136345" description="tRNA (guanine-N(7)-)-methyltransferase">
    <location>
        <begin position="1"/>
        <end position="219"/>
    </location>
</feature>
<feature type="binding site" evidence="1">
    <location>
        <position position="43"/>
    </location>
    <ligand>
        <name>S-adenosyl-L-methionine</name>
        <dbReference type="ChEBI" id="CHEBI:59789"/>
    </ligand>
</feature>
<feature type="binding site" evidence="1">
    <location>
        <position position="68"/>
    </location>
    <ligand>
        <name>S-adenosyl-L-methionine</name>
        <dbReference type="ChEBI" id="CHEBI:59789"/>
    </ligand>
</feature>
<feature type="binding site" evidence="1">
    <location>
        <position position="101"/>
    </location>
    <ligand>
        <name>S-adenosyl-L-methionine</name>
        <dbReference type="ChEBI" id="CHEBI:59789"/>
    </ligand>
</feature>
<feature type="binding site" evidence="1">
    <location>
        <position position="124"/>
    </location>
    <ligand>
        <name>S-adenosyl-L-methionine</name>
        <dbReference type="ChEBI" id="CHEBI:59789"/>
    </ligand>
</feature>
<feature type="binding site" evidence="1">
    <location>
        <position position="128"/>
    </location>
    <ligand>
        <name>substrate</name>
    </ligand>
</feature>
<feature type="binding site" evidence="1">
    <location>
        <position position="160"/>
    </location>
    <ligand>
        <name>substrate</name>
    </ligand>
</feature>
<keyword id="KW-0489">Methyltransferase</keyword>
<keyword id="KW-0949">S-adenosyl-L-methionine</keyword>
<keyword id="KW-0808">Transferase</keyword>
<keyword id="KW-0819">tRNA processing</keyword>
<reference key="1">
    <citation type="submission" date="2008-04" db="EMBL/GenBank/DDBJ databases">
        <title>Complete sequence of Clostridium botulinum strain Eklund.</title>
        <authorList>
            <person name="Brinkac L.M."/>
            <person name="Brown J.L."/>
            <person name="Bruce D."/>
            <person name="Detter C."/>
            <person name="Munk C."/>
            <person name="Smith L.A."/>
            <person name="Smith T.J."/>
            <person name="Sutton G."/>
            <person name="Brettin T.S."/>
        </authorList>
    </citation>
    <scope>NUCLEOTIDE SEQUENCE [LARGE SCALE GENOMIC DNA]</scope>
    <source>
        <strain>Eklund 17B / Type B</strain>
    </source>
</reference>
<protein>
    <recommendedName>
        <fullName evidence="1">tRNA (guanine-N(7)-)-methyltransferase</fullName>
        <ecNumber evidence="1">2.1.1.33</ecNumber>
    </recommendedName>
    <alternativeName>
        <fullName evidence="1">tRNA (guanine(46)-N(7))-methyltransferase</fullName>
    </alternativeName>
    <alternativeName>
        <fullName evidence="1">tRNA(m7G46)-methyltransferase</fullName>
    </alternativeName>
</protein>
<name>TRMB_CLOBB</name>